<accession>P74133</accession>
<reference key="1">
    <citation type="journal article" date="1996" name="DNA Res.">
        <title>Sequence analysis of the genome of the unicellular cyanobacterium Synechocystis sp. strain PCC6803. II. Sequence determination of the entire genome and assignment of potential protein-coding regions.</title>
        <authorList>
            <person name="Kaneko T."/>
            <person name="Sato S."/>
            <person name="Kotani H."/>
            <person name="Tanaka A."/>
            <person name="Asamizu E."/>
            <person name="Nakamura Y."/>
            <person name="Miyajima N."/>
            <person name="Hirosawa M."/>
            <person name="Sugiura M."/>
            <person name="Sasamoto S."/>
            <person name="Kimura T."/>
            <person name="Hosouchi T."/>
            <person name="Matsuno A."/>
            <person name="Muraki A."/>
            <person name="Nakazaki N."/>
            <person name="Naruo K."/>
            <person name="Okumura S."/>
            <person name="Shimpo S."/>
            <person name="Takeuchi C."/>
            <person name="Wada T."/>
            <person name="Watanabe A."/>
            <person name="Yamada M."/>
            <person name="Yasuda M."/>
            <person name="Tabata S."/>
        </authorList>
    </citation>
    <scope>NUCLEOTIDE SEQUENCE [LARGE SCALE GENOMIC DNA]</scope>
    <source>
        <strain>ATCC 27184 / PCC 6803 / Kazusa</strain>
    </source>
</reference>
<reference key="2">
    <citation type="journal article" date="2005" name="Biochemistry">
        <title>Crystal structure of dimeric heme oxygenase-2 from Synechocystis sp. PCC 6803 in complex with heme.</title>
        <authorList>
            <person name="Sugishima M."/>
            <person name="Hagiwara Y."/>
            <person name="Zhang X."/>
            <person name="Yoshida T."/>
            <person name="Migita C.T."/>
            <person name="Fukuyama K."/>
        </authorList>
    </citation>
    <scope>X-RAY CRYSTALLOGRAPHY (1.75 ANGSTROMS) IN COMPLEX WITH HEME</scope>
    <scope>SUBUNIT</scope>
    <scope>IRON-BINDING SITE</scope>
</reference>
<keyword id="KW-0002">3D-structure</keyword>
<keyword id="KW-0349">Heme</keyword>
<keyword id="KW-0408">Iron</keyword>
<keyword id="KW-0479">Metal-binding</keyword>
<keyword id="KW-0560">Oxidoreductase</keyword>
<keyword id="KW-0602">Photosynthesis</keyword>
<keyword id="KW-1185">Reference proteome</keyword>
<name>HO2_SYNY3</name>
<feature type="chain" id="PRO_0000209702" description="Heme oxygenase 2">
    <location>
        <begin position="1"/>
        <end position="250"/>
    </location>
</feature>
<feature type="region of interest" description="Disordered" evidence="3">
    <location>
        <begin position="228"/>
        <end position="250"/>
    </location>
</feature>
<feature type="binding site" description="axial binding residue">
    <location>
        <position position="16"/>
    </location>
    <ligand>
        <name>heme b</name>
        <dbReference type="ChEBI" id="CHEBI:60344"/>
    </ligand>
    <ligandPart>
        <name>Fe</name>
        <dbReference type="ChEBI" id="CHEBI:18248"/>
    </ligandPart>
</feature>
<feature type="helix" evidence="6">
    <location>
        <begin position="4"/>
        <end position="11"/>
    </location>
</feature>
<feature type="helix" evidence="6">
    <location>
        <begin position="13"/>
        <end position="20"/>
    </location>
</feature>
<feature type="helix" evidence="6">
    <location>
        <begin position="23"/>
        <end position="30"/>
    </location>
</feature>
<feature type="helix" evidence="6">
    <location>
        <begin position="35"/>
        <end position="58"/>
    </location>
</feature>
<feature type="turn" evidence="6">
    <location>
        <begin position="59"/>
        <end position="61"/>
    </location>
</feature>
<feature type="helix" evidence="6">
    <location>
        <begin position="63"/>
        <end position="68"/>
    </location>
</feature>
<feature type="helix" evidence="6">
    <location>
        <begin position="71"/>
        <end position="73"/>
    </location>
</feature>
<feature type="helix" evidence="6">
    <location>
        <begin position="76"/>
        <end position="87"/>
    </location>
</feature>
<feature type="helix" evidence="6">
    <location>
        <begin position="91"/>
        <end position="94"/>
    </location>
</feature>
<feature type="helix" evidence="6">
    <location>
        <begin position="99"/>
        <end position="114"/>
    </location>
</feature>
<feature type="helix" evidence="6">
    <location>
        <begin position="116"/>
        <end position="118"/>
    </location>
</feature>
<feature type="helix" evidence="6">
    <location>
        <begin position="119"/>
        <end position="130"/>
    </location>
</feature>
<feature type="helix" evidence="6">
    <location>
        <begin position="133"/>
        <end position="144"/>
    </location>
</feature>
<feature type="helix" evidence="6">
    <location>
        <begin position="154"/>
        <end position="156"/>
    </location>
</feature>
<feature type="helix" evidence="6">
    <location>
        <begin position="164"/>
        <end position="180"/>
    </location>
</feature>
<feature type="helix" evidence="6">
    <location>
        <begin position="185"/>
        <end position="207"/>
    </location>
</feature>
<feature type="helix" evidence="6">
    <location>
        <begin position="210"/>
        <end position="217"/>
    </location>
</feature>
<feature type="helix" evidence="6">
    <location>
        <begin position="219"/>
        <end position="226"/>
    </location>
</feature>
<feature type="strand" evidence="6">
    <location>
        <begin position="243"/>
        <end position="247"/>
    </location>
</feature>
<comment type="function">
    <text evidence="1">Catalyzes the opening of the heme ring with the release of iron. Key enzyme in the synthesis of the chromophoric part of the photosynthetic antennae.</text>
</comment>
<comment type="catalytic activity">
    <reaction evidence="2">
        <text>heme b + 3 reduced [NADPH--hemoprotein reductase] + 3 O2 = biliverdin IXalpha + CO + Fe(2+) + 3 oxidized [NADPH--hemoprotein reductase] + 3 H2O + H(+)</text>
        <dbReference type="Rhea" id="RHEA:21764"/>
        <dbReference type="Rhea" id="RHEA-COMP:11964"/>
        <dbReference type="Rhea" id="RHEA-COMP:11965"/>
        <dbReference type="ChEBI" id="CHEBI:15377"/>
        <dbReference type="ChEBI" id="CHEBI:15378"/>
        <dbReference type="ChEBI" id="CHEBI:15379"/>
        <dbReference type="ChEBI" id="CHEBI:17245"/>
        <dbReference type="ChEBI" id="CHEBI:29033"/>
        <dbReference type="ChEBI" id="CHEBI:57618"/>
        <dbReference type="ChEBI" id="CHEBI:57991"/>
        <dbReference type="ChEBI" id="CHEBI:58210"/>
        <dbReference type="ChEBI" id="CHEBI:60344"/>
        <dbReference type="EC" id="1.14.14.18"/>
    </reaction>
</comment>
<comment type="subunit">
    <text evidence="4">Homodimer.</text>
</comment>
<comment type="similarity">
    <text evidence="5">Belongs to the heme oxygenase family.</text>
</comment>
<proteinExistence type="evidence at protein level"/>
<evidence type="ECO:0000250" key="1"/>
<evidence type="ECO:0000250" key="2">
    <source>
        <dbReference type="UniProtKB" id="O48782"/>
    </source>
</evidence>
<evidence type="ECO:0000256" key="3">
    <source>
        <dbReference type="SAM" id="MobiDB-lite"/>
    </source>
</evidence>
<evidence type="ECO:0000269" key="4">
    <source>
    </source>
</evidence>
<evidence type="ECO:0000305" key="5"/>
<evidence type="ECO:0007829" key="6">
    <source>
        <dbReference type="PDB" id="1WOV"/>
    </source>
</evidence>
<gene>
    <name type="primary">pbsA2</name>
    <name type="ordered locus">sll1875</name>
</gene>
<protein>
    <recommendedName>
        <fullName>Heme oxygenase 2</fullName>
        <ecNumber evidence="2">1.14.14.18</ecNumber>
    </recommendedName>
</protein>
<organism>
    <name type="scientific">Synechocystis sp. (strain ATCC 27184 / PCC 6803 / Kazusa)</name>
    <dbReference type="NCBI Taxonomy" id="1111708"/>
    <lineage>
        <taxon>Bacteria</taxon>
        <taxon>Bacillati</taxon>
        <taxon>Cyanobacteriota</taxon>
        <taxon>Cyanophyceae</taxon>
        <taxon>Synechococcales</taxon>
        <taxon>Merismopediaceae</taxon>
        <taxon>Synechocystis</taxon>
    </lineage>
</organism>
<dbReference type="EC" id="1.14.14.18" evidence="2"/>
<dbReference type="EMBL" id="BA000022">
    <property type="protein sequence ID" value="BAA18219.1"/>
    <property type="molecule type" value="Genomic_DNA"/>
</dbReference>
<dbReference type="PIR" id="S75658">
    <property type="entry name" value="S75658"/>
</dbReference>
<dbReference type="PDB" id="1WOV">
    <property type="method" value="X-ray"/>
    <property type="resolution" value="1.75 A"/>
    <property type="chains" value="A/B=1-250"/>
</dbReference>
<dbReference type="PDB" id="1WOW">
    <property type="method" value="X-ray"/>
    <property type="resolution" value="2.20 A"/>
    <property type="chains" value="A/B=1-250"/>
</dbReference>
<dbReference type="PDB" id="1WOX">
    <property type="method" value="X-ray"/>
    <property type="resolution" value="2.10 A"/>
    <property type="chains" value="A/B=1-250"/>
</dbReference>
<dbReference type="PDBsum" id="1WOV"/>
<dbReference type="PDBsum" id="1WOW"/>
<dbReference type="PDBsum" id="1WOX"/>
<dbReference type="SMR" id="P74133"/>
<dbReference type="IntAct" id="P74133">
    <property type="interactions" value="2"/>
</dbReference>
<dbReference type="STRING" id="1148.gene:10499092"/>
<dbReference type="PaxDb" id="1148-1653304"/>
<dbReference type="EnsemblBacteria" id="BAA18219">
    <property type="protein sequence ID" value="BAA18219"/>
    <property type="gene ID" value="BAA18219"/>
</dbReference>
<dbReference type="KEGG" id="syn:sll1875"/>
<dbReference type="eggNOG" id="COG5398">
    <property type="taxonomic scope" value="Bacteria"/>
</dbReference>
<dbReference type="InParanoid" id="P74133"/>
<dbReference type="PhylomeDB" id="P74133"/>
<dbReference type="EvolutionaryTrace" id="P74133"/>
<dbReference type="Proteomes" id="UP000001425">
    <property type="component" value="Chromosome"/>
</dbReference>
<dbReference type="GO" id="GO:0020037">
    <property type="term" value="F:heme binding"/>
    <property type="evidence" value="ECO:0000318"/>
    <property type="project" value="GO_Central"/>
</dbReference>
<dbReference type="GO" id="GO:0004392">
    <property type="term" value="F:heme oxygenase (decyclizing) activity"/>
    <property type="evidence" value="ECO:0000318"/>
    <property type="project" value="GO_Central"/>
</dbReference>
<dbReference type="GO" id="GO:0046872">
    <property type="term" value="F:metal ion binding"/>
    <property type="evidence" value="ECO:0007669"/>
    <property type="project" value="UniProtKB-KW"/>
</dbReference>
<dbReference type="GO" id="GO:0042167">
    <property type="term" value="P:heme catabolic process"/>
    <property type="evidence" value="ECO:0000318"/>
    <property type="project" value="GO_Central"/>
</dbReference>
<dbReference type="GO" id="GO:0006788">
    <property type="term" value="P:heme oxidation"/>
    <property type="evidence" value="ECO:0000318"/>
    <property type="project" value="GO_Central"/>
</dbReference>
<dbReference type="GO" id="GO:0015979">
    <property type="term" value="P:photosynthesis"/>
    <property type="evidence" value="ECO:0007669"/>
    <property type="project" value="UniProtKB-KW"/>
</dbReference>
<dbReference type="GO" id="GO:0006979">
    <property type="term" value="P:response to oxidative stress"/>
    <property type="evidence" value="ECO:0000318"/>
    <property type="project" value="GO_Central"/>
</dbReference>
<dbReference type="CDD" id="cd19165">
    <property type="entry name" value="HemeO"/>
    <property type="match status" value="1"/>
</dbReference>
<dbReference type="FunFam" id="1.20.910.10:FF:000001">
    <property type="entry name" value="Heme oxygenase 1"/>
    <property type="match status" value="1"/>
</dbReference>
<dbReference type="Gene3D" id="1.20.910.10">
    <property type="entry name" value="Heme oxygenase-like"/>
    <property type="match status" value="1"/>
</dbReference>
<dbReference type="InterPro" id="IPR002051">
    <property type="entry name" value="Haem_Oase"/>
</dbReference>
<dbReference type="InterPro" id="IPR016053">
    <property type="entry name" value="Haem_Oase-like"/>
</dbReference>
<dbReference type="InterPro" id="IPR016084">
    <property type="entry name" value="Haem_Oase-like_multi-hlx"/>
</dbReference>
<dbReference type="InterPro" id="IPR018207">
    <property type="entry name" value="Haem_oxygenase_CS"/>
</dbReference>
<dbReference type="PANTHER" id="PTHR10720">
    <property type="entry name" value="HEME OXYGENASE"/>
    <property type="match status" value="1"/>
</dbReference>
<dbReference type="PANTHER" id="PTHR10720:SF0">
    <property type="entry name" value="HEME OXYGENASE"/>
    <property type="match status" value="1"/>
</dbReference>
<dbReference type="Pfam" id="PF01126">
    <property type="entry name" value="Heme_oxygenase"/>
    <property type="match status" value="1"/>
</dbReference>
<dbReference type="PIRSF" id="PIRSF000343">
    <property type="entry name" value="Haem_Oase"/>
    <property type="match status" value="1"/>
</dbReference>
<dbReference type="PRINTS" id="PR00088">
    <property type="entry name" value="HAEMOXYGNASE"/>
</dbReference>
<dbReference type="SUPFAM" id="SSF48613">
    <property type="entry name" value="Heme oxygenase-like"/>
    <property type="match status" value="1"/>
</dbReference>
<dbReference type="PROSITE" id="PS00593">
    <property type="entry name" value="HEME_OXYGENASE"/>
    <property type="match status" value="1"/>
</dbReference>
<sequence>MTNLAQKLRYGTQQSHTLAENTAYMKCFLKGIVEREPFRQLLANLYYLYSALEAALRQHRDNEIISAIYFPELNRTDKLAEDLTYYYGPNWQQIIQPTPCAKIYVDRLKTIAASEPELLIAHCYTRYLGDLSGGQSLKNIIRSALQLPEGEGTAMYEFDSLPTPGDRRQFKEIYRDVLNSLPLDEATINRIVEEANYAFSLNREVMHDLEDLIKAAIGEHTFDLLTRQDRPGSTEARSTAGHPITLMVGE</sequence>